<gene>
    <name type="primary">MSS116</name>
    <name type="ordered locus">CAGL0F05577g</name>
</gene>
<feature type="transit peptide" description="Mitochondrion" evidence="2">
    <location>
        <begin position="1"/>
        <end position="22"/>
    </location>
</feature>
<feature type="chain" id="PRO_0000256010" description="ATP-dependent RNA helicase MSS116, mitochondrial">
    <location>
        <begin position="23"/>
        <end position="666"/>
    </location>
</feature>
<feature type="domain" description="Helicase ATP-binding" evidence="3">
    <location>
        <begin position="192"/>
        <end position="379"/>
    </location>
</feature>
<feature type="domain" description="Helicase C-terminal" evidence="4">
    <location>
        <begin position="408"/>
        <end position="560"/>
    </location>
</feature>
<feature type="region of interest" description="Disordered" evidence="5">
    <location>
        <begin position="38"/>
        <end position="131"/>
    </location>
</feature>
<feature type="short sequence motif" description="Q motif">
    <location>
        <begin position="159"/>
        <end position="187"/>
    </location>
</feature>
<feature type="short sequence motif" description="DEAD box">
    <location>
        <begin position="320"/>
        <end position="323"/>
    </location>
</feature>
<feature type="compositionally biased region" description="Basic and acidic residues" evidence="5">
    <location>
        <begin position="38"/>
        <end position="60"/>
    </location>
</feature>
<feature type="compositionally biased region" description="Polar residues" evidence="5">
    <location>
        <begin position="120"/>
        <end position="131"/>
    </location>
</feature>
<feature type="binding site" evidence="3">
    <location>
        <begin position="205"/>
        <end position="212"/>
    </location>
    <ligand>
        <name>ATP</name>
        <dbReference type="ChEBI" id="CHEBI:30616"/>
    </ligand>
</feature>
<reference key="1">
    <citation type="journal article" date="2004" name="Nature">
        <title>Genome evolution in yeasts.</title>
        <authorList>
            <person name="Dujon B."/>
            <person name="Sherman D."/>
            <person name="Fischer G."/>
            <person name="Durrens P."/>
            <person name="Casaregola S."/>
            <person name="Lafontaine I."/>
            <person name="de Montigny J."/>
            <person name="Marck C."/>
            <person name="Neuveglise C."/>
            <person name="Talla E."/>
            <person name="Goffard N."/>
            <person name="Frangeul L."/>
            <person name="Aigle M."/>
            <person name="Anthouard V."/>
            <person name="Babour A."/>
            <person name="Barbe V."/>
            <person name="Barnay S."/>
            <person name="Blanchin S."/>
            <person name="Beckerich J.-M."/>
            <person name="Beyne E."/>
            <person name="Bleykasten C."/>
            <person name="Boisrame A."/>
            <person name="Boyer J."/>
            <person name="Cattolico L."/>
            <person name="Confanioleri F."/>
            <person name="de Daruvar A."/>
            <person name="Despons L."/>
            <person name="Fabre E."/>
            <person name="Fairhead C."/>
            <person name="Ferry-Dumazet H."/>
            <person name="Groppi A."/>
            <person name="Hantraye F."/>
            <person name="Hennequin C."/>
            <person name="Jauniaux N."/>
            <person name="Joyet P."/>
            <person name="Kachouri R."/>
            <person name="Kerrest A."/>
            <person name="Koszul R."/>
            <person name="Lemaire M."/>
            <person name="Lesur I."/>
            <person name="Ma L."/>
            <person name="Muller H."/>
            <person name="Nicaud J.-M."/>
            <person name="Nikolski M."/>
            <person name="Oztas S."/>
            <person name="Ozier-Kalogeropoulos O."/>
            <person name="Pellenz S."/>
            <person name="Potier S."/>
            <person name="Richard G.-F."/>
            <person name="Straub M.-L."/>
            <person name="Suleau A."/>
            <person name="Swennen D."/>
            <person name="Tekaia F."/>
            <person name="Wesolowski-Louvel M."/>
            <person name="Westhof E."/>
            <person name="Wirth B."/>
            <person name="Zeniou-Meyer M."/>
            <person name="Zivanovic Y."/>
            <person name="Bolotin-Fukuhara M."/>
            <person name="Thierry A."/>
            <person name="Bouchier C."/>
            <person name="Caudron B."/>
            <person name="Scarpelli C."/>
            <person name="Gaillardin C."/>
            <person name="Weissenbach J."/>
            <person name="Wincker P."/>
            <person name="Souciet J.-L."/>
        </authorList>
    </citation>
    <scope>NUCLEOTIDE SEQUENCE [LARGE SCALE GENOMIC DNA]</scope>
    <source>
        <strain>ATCC 2001 / BCRC 20586 / JCM 3761 / NBRC 0622 / NRRL Y-65 / CBS 138</strain>
    </source>
</reference>
<dbReference type="EC" id="3.6.4.13"/>
<dbReference type="EMBL" id="CR380952">
    <property type="protein sequence ID" value="CAG59137.1"/>
    <property type="molecule type" value="Genomic_DNA"/>
</dbReference>
<dbReference type="RefSeq" id="XP_446213.1">
    <property type="nucleotide sequence ID" value="XM_446213.1"/>
</dbReference>
<dbReference type="SMR" id="Q6FU81"/>
<dbReference type="FunCoup" id="Q6FU81">
    <property type="interactions" value="239"/>
</dbReference>
<dbReference type="STRING" id="284593.Q6FU81"/>
<dbReference type="EnsemblFungi" id="CAGL0F05577g-T">
    <property type="protein sequence ID" value="CAGL0F05577g-T-p1"/>
    <property type="gene ID" value="CAGL0F05577g"/>
</dbReference>
<dbReference type="KEGG" id="cgr:2887713"/>
<dbReference type="CGD" id="CAL0129558">
    <property type="gene designation" value="CAGL0F05577g"/>
</dbReference>
<dbReference type="VEuPathDB" id="FungiDB:CAGL0F05577g"/>
<dbReference type="eggNOG" id="KOG0342">
    <property type="taxonomic scope" value="Eukaryota"/>
</dbReference>
<dbReference type="HOGENOM" id="CLU_003041_26_6_1"/>
<dbReference type="InParanoid" id="Q6FU81"/>
<dbReference type="OMA" id="AHEKIDQ"/>
<dbReference type="Proteomes" id="UP000002428">
    <property type="component" value="Chromosome F"/>
</dbReference>
<dbReference type="GO" id="GO:0005761">
    <property type="term" value="C:mitochondrial ribosome"/>
    <property type="evidence" value="ECO:0007669"/>
    <property type="project" value="EnsemblFungi"/>
</dbReference>
<dbReference type="GO" id="GO:0005524">
    <property type="term" value="F:ATP binding"/>
    <property type="evidence" value="ECO:0007669"/>
    <property type="project" value="UniProtKB-KW"/>
</dbReference>
<dbReference type="GO" id="GO:0016887">
    <property type="term" value="F:ATP hydrolysis activity"/>
    <property type="evidence" value="ECO:0007669"/>
    <property type="project" value="RHEA"/>
</dbReference>
<dbReference type="GO" id="GO:0051880">
    <property type="term" value="F:G-quadruplex DNA binding"/>
    <property type="evidence" value="ECO:0007669"/>
    <property type="project" value="EnsemblFungi"/>
</dbReference>
<dbReference type="GO" id="GO:0002151">
    <property type="term" value="F:G-quadruplex RNA binding"/>
    <property type="evidence" value="ECO:0007669"/>
    <property type="project" value="EnsemblFungi"/>
</dbReference>
<dbReference type="GO" id="GO:0003724">
    <property type="term" value="F:RNA helicase activity"/>
    <property type="evidence" value="ECO:0007669"/>
    <property type="project" value="UniProtKB-EC"/>
</dbReference>
<dbReference type="GO" id="GO:0033592">
    <property type="term" value="F:RNA strand annealing activity"/>
    <property type="evidence" value="ECO:0007669"/>
    <property type="project" value="EnsemblFungi"/>
</dbReference>
<dbReference type="GO" id="GO:0000372">
    <property type="term" value="P:Group I intron splicing"/>
    <property type="evidence" value="ECO:0007669"/>
    <property type="project" value="EnsemblFungi"/>
</dbReference>
<dbReference type="GO" id="GO:0000373">
    <property type="term" value="P:Group II intron splicing"/>
    <property type="evidence" value="ECO:0007669"/>
    <property type="project" value="EnsemblFungi"/>
</dbReference>
<dbReference type="GO" id="GO:0000963">
    <property type="term" value="P:mitochondrial RNA processing"/>
    <property type="evidence" value="ECO:0007669"/>
    <property type="project" value="EnsemblFungi"/>
</dbReference>
<dbReference type="GO" id="GO:0070125">
    <property type="term" value="P:mitochondrial translational elongation"/>
    <property type="evidence" value="ECO:0007669"/>
    <property type="project" value="EnsemblFungi"/>
</dbReference>
<dbReference type="GO" id="GO:0070124">
    <property type="term" value="P:mitochondrial translational initiation"/>
    <property type="evidence" value="ECO:0007669"/>
    <property type="project" value="EnsemblFungi"/>
</dbReference>
<dbReference type="GO" id="GO:0006397">
    <property type="term" value="P:mRNA processing"/>
    <property type="evidence" value="ECO:0007669"/>
    <property type="project" value="UniProtKB-KW"/>
</dbReference>
<dbReference type="GO" id="GO:0006417">
    <property type="term" value="P:regulation of translation"/>
    <property type="evidence" value="ECO:0007669"/>
    <property type="project" value="UniProtKB-KW"/>
</dbReference>
<dbReference type="GO" id="GO:0034337">
    <property type="term" value="P:RNA folding"/>
    <property type="evidence" value="ECO:0007669"/>
    <property type="project" value="EnsemblFungi"/>
</dbReference>
<dbReference type="GO" id="GO:0006392">
    <property type="term" value="P:transcription elongation by mitochondrial RNA polymerase"/>
    <property type="evidence" value="ECO:0007669"/>
    <property type="project" value="EnsemblFungi"/>
</dbReference>
<dbReference type="CDD" id="cd18787">
    <property type="entry name" value="SF2_C_DEAD"/>
    <property type="match status" value="1"/>
</dbReference>
<dbReference type="Gene3D" id="3.40.50.300">
    <property type="entry name" value="P-loop containing nucleotide triphosphate hydrolases"/>
    <property type="match status" value="2"/>
</dbReference>
<dbReference type="InterPro" id="IPR011545">
    <property type="entry name" value="DEAD/DEAH_box_helicase_dom"/>
</dbReference>
<dbReference type="InterPro" id="IPR014001">
    <property type="entry name" value="Helicase_ATP-bd"/>
</dbReference>
<dbReference type="InterPro" id="IPR001650">
    <property type="entry name" value="Helicase_C-like"/>
</dbReference>
<dbReference type="InterPro" id="IPR027417">
    <property type="entry name" value="P-loop_NTPase"/>
</dbReference>
<dbReference type="InterPro" id="IPR000629">
    <property type="entry name" value="RNA-helicase_DEAD-box_CS"/>
</dbReference>
<dbReference type="PANTHER" id="PTHR24031">
    <property type="entry name" value="RNA HELICASE"/>
    <property type="match status" value="1"/>
</dbReference>
<dbReference type="Pfam" id="PF00270">
    <property type="entry name" value="DEAD"/>
    <property type="match status" value="1"/>
</dbReference>
<dbReference type="Pfam" id="PF00271">
    <property type="entry name" value="Helicase_C"/>
    <property type="match status" value="1"/>
</dbReference>
<dbReference type="SMART" id="SM00487">
    <property type="entry name" value="DEXDc"/>
    <property type="match status" value="1"/>
</dbReference>
<dbReference type="SMART" id="SM00490">
    <property type="entry name" value="HELICc"/>
    <property type="match status" value="1"/>
</dbReference>
<dbReference type="SUPFAM" id="SSF52540">
    <property type="entry name" value="P-loop containing nucleoside triphosphate hydrolases"/>
    <property type="match status" value="1"/>
</dbReference>
<dbReference type="PROSITE" id="PS00039">
    <property type="entry name" value="DEAD_ATP_HELICASE"/>
    <property type="match status" value="1"/>
</dbReference>
<dbReference type="PROSITE" id="PS51192">
    <property type="entry name" value="HELICASE_ATP_BIND_1"/>
    <property type="match status" value="1"/>
</dbReference>
<dbReference type="PROSITE" id="PS51194">
    <property type="entry name" value="HELICASE_CTER"/>
    <property type="match status" value="1"/>
</dbReference>
<dbReference type="PROSITE" id="PS51195">
    <property type="entry name" value="Q_MOTIF"/>
    <property type="match status" value="1"/>
</dbReference>
<sequence length="666" mass="76320">MLRHCSLGLVTTQISAIAPLRLVGSPLFCRSYQDFAGRDRRSSRSREDKPYNSRTRRFDDEGSSNYSSSRDDYRGQNTYGFRGKAPRKNFSSRDNYSSRDNFRSSNGFQERGYKNKFSKNTKSYSKGGNTSGSFIPEGKMAKMTHIGKSDSDIVVTLESLLEKNVISRDLYDSISRMGFEQLTPVQQKTIEPIITNSDSDIIARAKTGTGKTFAFLLPIFQHLLNTKIDSQNKVKSVIVAPTRDLALQIEDEVRKIHSKNRKLKAFECVSLVGGTNFDRSIRYIEKVSPSIVIGTPGRLIDVMEKFGNKFFKDVDFKVLDEADRLLEIGFKEDLSYINKMLNTLNTNSTEHIRTLLFSATLDHKVQSLSNDIMNKEECLYIDTIDENEPQAHEKIDQTLVVGETFADNLYAAIEHIREFGTKTPNYKSILFLPTVKFTKFMATILKRQVKLPIYEFHGQIDQKKRTRIVNEFKTMKKGLLVCTDVGARGMDFPNITEVLQIGLPSEIPNYIHRIGRTARSGKEGSSVTFISKEELPFFEILEDKHNVTIKNIRKFEAQPHVMADLSLRLHVSEDELQEIILSVISFYRACLKDYGINYKNMLPQIAHTYGTLLQNEDKRIPLAGNHILNRLGMDRDPIATKMFQIDEMPNQYNRRGPRSNYNRRRF</sequence>
<accession>Q6FU81</accession>
<name>MS116_CANGA</name>
<protein>
    <recommendedName>
        <fullName>ATP-dependent RNA helicase MSS116, mitochondrial</fullName>
        <ecNumber>3.6.4.13</ecNumber>
    </recommendedName>
</protein>
<organism>
    <name type="scientific">Candida glabrata (strain ATCC 2001 / BCRC 20586 / JCM 3761 / NBRC 0622 / NRRL Y-65 / CBS 138)</name>
    <name type="common">Yeast</name>
    <name type="synonym">Nakaseomyces glabratus</name>
    <dbReference type="NCBI Taxonomy" id="284593"/>
    <lineage>
        <taxon>Eukaryota</taxon>
        <taxon>Fungi</taxon>
        <taxon>Dikarya</taxon>
        <taxon>Ascomycota</taxon>
        <taxon>Saccharomycotina</taxon>
        <taxon>Saccharomycetes</taxon>
        <taxon>Saccharomycetales</taxon>
        <taxon>Saccharomycetaceae</taxon>
        <taxon>Nakaseomyces</taxon>
    </lineage>
</organism>
<proteinExistence type="inferred from homology"/>
<evidence type="ECO:0000250" key="1"/>
<evidence type="ECO:0000255" key="2"/>
<evidence type="ECO:0000255" key="3">
    <source>
        <dbReference type="PROSITE-ProRule" id="PRU00541"/>
    </source>
</evidence>
<evidence type="ECO:0000255" key="4">
    <source>
        <dbReference type="PROSITE-ProRule" id="PRU00542"/>
    </source>
</evidence>
<evidence type="ECO:0000256" key="5">
    <source>
        <dbReference type="SAM" id="MobiDB-lite"/>
    </source>
</evidence>
<evidence type="ECO:0000305" key="6"/>
<comment type="function">
    <text evidence="1">ATP-dependent RNA helicase required for mitochondrial splicing of group I and II introns. Also required for efficient mitochondrial translation (By similarity).</text>
</comment>
<comment type="catalytic activity">
    <reaction>
        <text>ATP + H2O = ADP + phosphate + H(+)</text>
        <dbReference type="Rhea" id="RHEA:13065"/>
        <dbReference type="ChEBI" id="CHEBI:15377"/>
        <dbReference type="ChEBI" id="CHEBI:15378"/>
        <dbReference type="ChEBI" id="CHEBI:30616"/>
        <dbReference type="ChEBI" id="CHEBI:43474"/>
        <dbReference type="ChEBI" id="CHEBI:456216"/>
        <dbReference type="EC" id="3.6.4.13"/>
    </reaction>
</comment>
<comment type="subcellular location">
    <subcellularLocation>
        <location evidence="1">Mitochondrion matrix</location>
    </subcellularLocation>
</comment>
<comment type="domain">
    <text>The Q motif is unique to and characteristic of the DEAD box family of RNA helicases and controls ATP binding and hydrolysis.</text>
</comment>
<comment type="similarity">
    <text evidence="6">Belongs to the DEAD box helicase family. DDX18/HAS1 subfamily.</text>
</comment>
<keyword id="KW-0067">ATP-binding</keyword>
<keyword id="KW-0347">Helicase</keyword>
<keyword id="KW-0378">Hydrolase</keyword>
<keyword id="KW-0496">Mitochondrion</keyword>
<keyword id="KW-0507">mRNA processing</keyword>
<keyword id="KW-0508">mRNA splicing</keyword>
<keyword id="KW-0547">Nucleotide-binding</keyword>
<keyword id="KW-1185">Reference proteome</keyword>
<keyword id="KW-0694">RNA-binding</keyword>
<keyword id="KW-0809">Transit peptide</keyword>
<keyword id="KW-0810">Translation regulation</keyword>